<keyword id="KW-0378">Hydrolase</keyword>
<keyword id="KW-0460">Magnesium</keyword>
<keyword id="KW-0479">Metal-binding</keyword>
<keyword id="KW-0704">Schiff base</keyword>
<reference key="1">
    <citation type="submission" date="2008-10" db="EMBL/GenBank/DDBJ databases">
        <title>Genome sequence of Bacillus cereus AH820.</title>
        <authorList>
            <person name="Dodson R.J."/>
            <person name="Durkin A.S."/>
            <person name="Rosovitz M.J."/>
            <person name="Rasko D.A."/>
            <person name="Hoffmaster A."/>
            <person name="Ravel J."/>
            <person name="Sutton G."/>
        </authorList>
    </citation>
    <scope>NUCLEOTIDE SEQUENCE [LARGE SCALE GENOMIC DNA]</scope>
    <source>
        <strain>AH820</strain>
    </source>
</reference>
<organism>
    <name type="scientific">Bacillus cereus (strain AH820)</name>
    <dbReference type="NCBI Taxonomy" id="405535"/>
    <lineage>
        <taxon>Bacteria</taxon>
        <taxon>Bacillati</taxon>
        <taxon>Bacillota</taxon>
        <taxon>Bacilli</taxon>
        <taxon>Bacillales</taxon>
        <taxon>Bacillaceae</taxon>
        <taxon>Bacillus</taxon>
        <taxon>Bacillus cereus group</taxon>
    </lineage>
</organism>
<evidence type="ECO:0000255" key="1">
    <source>
        <dbReference type="HAMAP-Rule" id="MF_01375"/>
    </source>
</evidence>
<gene>
    <name evidence="1" type="primary">phnX</name>
    <name type="ordered locus">BCAH820_1414</name>
</gene>
<accession>B7JFQ8</accession>
<proteinExistence type="inferred from homology"/>
<sequence>MKIEAVIFDWAGTTVDYGCFAPLEVFMEIFHKRGVGITAEEARKPMGLLKIDHVRALTEMPRIANEWNRIFGQLPTETDIQEMYEEFEEILFAILPRYASPIHGVKEVIASLRERGIKIGSTTGYTREMMDIVAKEAALQGYKPDFLVTPDDVPAGRPYPWMCYKNAMELGVYPMNHMIKIGDTVSDMKEGRNAGMWTVGVILGSSELGLSEEEVENMDSAELREKIEVVRNRFVENGAHFTIETMQELESVMERIEKQELIIS</sequence>
<feature type="chain" id="PRO_1000144826" description="Phosphonoacetaldehyde hydrolase">
    <location>
        <begin position="1"/>
        <end position="264"/>
    </location>
</feature>
<feature type="active site" description="Nucleophile" evidence="1">
    <location>
        <position position="9"/>
    </location>
</feature>
<feature type="active site" description="Schiff-base intermediate with substrate" evidence="1">
    <location>
        <position position="50"/>
    </location>
</feature>
<feature type="binding site" evidence="1">
    <location>
        <position position="9"/>
    </location>
    <ligand>
        <name>Mg(2+)</name>
        <dbReference type="ChEBI" id="CHEBI:18420"/>
    </ligand>
</feature>
<feature type="binding site" evidence="1">
    <location>
        <position position="11"/>
    </location>
    <ligand>
        <name>Mg(2+)</name>
        <dbReference type="ChEBI" id="CHEBI:18420"/>
    </ligand>
</feature>
<feature type="binding site" evidence="1">
    <location>
        <position position="183"/>
    </location>
    <ligand>
        <name>Mg(2+)</name>
        <dbReference type="ChEBI" id="CHEBI:18420"/>
    </ligand>
</feature>
<protein>
    <recommendedName>
        <fullName evidence="1">Phosphonoacetaldehyde hydrolase</fullName>
        <shortName evidence="1">Phosphonatase</shortName>
        <ecNumber evidence="1">3.11.1.1</ecNumber>
    </recommendedName>
    <alternativeName>
        <fullName evidence="1">Phosphonoacetaldehyde phosphonohydrolase</fullName>
    </alternativeName>
</protein>
<name>PHNX_BACC0</name>
<comment type="function">
    <text evidence="1">Involved in phosphonate degradation.</text>
</comment>
<comment type="catalytic activity">
    <reaction evidence="1">
        <text>phosphonoacetaldehyde + H2O = acetaldehyde + phosphate + H(+)</text>
        <dbReference type="Rhea" id="RHEA:18905"/>
        <dbReference type="ChEBI" id="CHEBI:15343"/>
        <dbReference type="ChEBI" id="CHEBI:15377"/>
        <dbReference type="ChEBI" id="CHEBI:15378"/>
        <dbReference type="ChEBI" id="CHEBI:43474"/>
        <dbReference type="ChEBI" id="CHEBI:58383"/>
        <dbReference type="EC" id="3.11.1.1"/>
    </reaction>
</comment>
<comment type="cofactor">
    <cofactor evidence="1">
        <name>Mg(2+)</name>
        <dbReference type="ChEBI" id="CHEBI:18420"/>
    </cofactor>
    <text evidence="1">Binds 1 Mg(2+) ion per subunit.</text>
</comment>
<comment type="subunit">
    <text evidence="1">Homodimer.</text>
</comment>
<comment type="similarity">
    <text evidence="1">Belongs to the HAD-like hydrolase superfamily. PhnX family.</text>
</comment>
<dbReference type="EC" id="3.11.1.1" evidence="1"/>
<dbReference type="EMBL" id="CP001283">
    <property type="protein sequence ID" value="ACK88943.1"/>
    <property type="molecule type" value="Genomic_DNA"/>
</dbReference>
<dbReference type="RefSeq" id="WP_000687376.1">
    <property type="nucleotide sequence ID" value="NC_011773.1"/>
</dbReference>
<dbReference type="SMR" id="B7JFQ8"/>
<dbReference type="KEGG" id="bcu:BCAH820_1414"/>
<dbReference type="HOGENOM" id="CLU_045011_12_0_9"/>
<dbReference type="Proteomes" id="UP000001363">
    <property type="component" value="Chromosome"/>
</dbReference>
<dbReference type="GO" id="GO:0005829">
    <property type="term" value="C:cytosol"/>
    <property type="evidence" value="ECO:0007669"/>
    <property type="project" value="TreeGrafter"/>
</dbReference>
<dbReference type="GO" id="GO:0000287">
    <property type="term" value="F:magnesium ion binding"/>
    <property type="evidence" value="ECO:0007669"/>
    <property type="project" value="UniProtKB-UniRule"/>
</dbReference>
<dbReference type="GO" id="GO:0008967">
    <property type="term" value="F:phosphoglycolate phosphatase activity"/>
    <property type="evidence" value="ECO:0007669"/>
    <property type="project" value="TreeGrafter"/>
</dbReference>
<dbReference type="GO" id="GO:0050194">
    <property type="term" value="F:phosphonoacetaldehyde hydrolase activity"/>
    <property type="evidence" value="ECO:0007669"/>
    <property type="project" value="UniProtKB-UniRule"/>
</dbReference>
<dbReference type="GO" id="GO:0006281">
    <property type="term" value="P:DNA repair"/>
    <property type="evidence" value="ECO:0007669"/>
    <property type="project" value="TreeGrafter"/>
</dbReference>
<dbReference type="GO" id="GO:0019700">
    <property type="term" value="P:organic phosphonate catabolic process"/>
    <property type="evidence" value="ECO:0007669"/>
    <property type="project" value="InterPro"/>
</dbReference>
<dbReference type="CDD" id="cd02586">
    <property type="entry name" value="HAD_PHN"/>
    <property type="match status" value="1"/>
</dbReference>
<dbReference type="FunFam" id="1.10.150.240:FF:000006">
    <property type="entry name" value="Phosphonoacetaldehyde hydrolase"/>
    <property type="match status" value="1"/>
</dbReference>
<dbReference type="FunFam" id="3.40.50.1000:FF:000072">
    <property type="entry name" value="Phosphonoacetaldehyde hydrolase"/>
    <property type="match status" value="1"/>
</dbReference>
<dbReference type="Gene3D" id="3.40.50.1000">
    <property type="entry name" value="HAD superfamily/HAD-like"/>
    <property type="match status" value="1"/>
</dbReference>
<dbReference type="Gene3D" id="1.10.150.240">
    <property type="entry name" value="Putative phosphatase, domain 2"/>
    <property type="match status" value="1"/>
</dbReference>
<dbReference type="HAMAP" id="MF_01375">
    <property type="entry name" value="PhnX"/>
    <property type="match status" value="1"/>
</dbReference>
<dbReference type="InterPro" id="IPR050155">
    <property type="entry name" value="HAD-like_hydrolase_sf"/>
</dbReference>
<dbReference type="InterPro" id="IPR036412">
    <property type="entry name" value="HAD-like_sf"/>
</dbReference>
<dbReference type="InterPro" id="IPR006439">
    <property type="entry name" value="HAD-SF_hydro_IA"/>
</dbReference>
<dbReference type="InterPro" id="IPR023214">
    <property type="entry name" value="HAD_sf"/>
</dbReference>
<dbReference type="InterPro" id="IPR023198">
    <property type="entry name" value="PGP-like_dom2"/>
</dbReference>
<dbReference type="InterPro" id="IPR006323">
    <property type="entry name" value="Phosphonoacetald_hydro"/>
</dbReference>
<dbReference type="NCBIfam" id="TIGR01549">
    <property type="entry name" value="HAD-SF-IA-v1"/>
    <property type="match status" value="1"/>
</dbReference>
<dbReference type="NCBIfam" id="TIGR01509">
    <property type="entry name" value="HAD-SF-IA-v3"/>
    <property type="match status" value="1"/>
</dbReference>
<dbReference type="NCBIfam" id="TIGR01422">
    <property type="entry name" value="phosphonatase"/>
    <property type="match status" value="1"/>
</dbReference>
<dbReference type="PANTHER" id="PTHR43434">
    <property type="entry name" value="PHOSPHOGLYCOLATE PHOSPHATASE"/>
    <property type="match status" value="1"/>
</dbReference>
<dbReference type="PANTHER" id="PTHR43434:SF19">
    <property type="entry name" value="PHOSPHONOACETALDEHYDE HYDROLASE"/>
    <property type="match status" value="1"/>
</dbReference>
<dbReference type="Pfam" id="PF00702">
    <property type="entry name" value="Hydrolase"/>
    <property type="match status" value="1"/>
</dbReference>
<dbReference type="SFLD" id="SFLDG01135">
    <property type="entry name" value="C1.5.6:_HAD__Beta-PGM__Phospha"/>
    <property type="match status" value="1"/>
</dbReference>
<dbReference type="SFLD" id="SFLDF00038">
    <property type="entry name" value="phosphonoacetaldehyde_hydrolas"/>
    <property type="match status" value="1"/>
</dbReference>
<dbReference type="SUPFAM" id="SSF56784">
    <property type="entry name" value="HAD-like"/>
    <property type="match status" value="1"/>
</dbReference>